<sequence>MGDAGSERSKAPSLPPRCPCGFWGSSKTMNLCSKCFADFQKKQPDDDSTPSTSNSQSDLFSEETTSDNNNTSVTTPTLSPSQQSLPTELNVTSPSEEECGPCTDTAHVSLITPTKRSCGADSQSESEASPVKRPRLVENPERPEESGRSKQKSRRRCFQCQTKLELVQQELGSCRCGYVFCMLHRLPEQHDCTFDHMGRGREEAIMKMVKLDRKVGRSCQRIGEGCS</sequence>
<keyword id="KW-0479">Metal-binding</keyword>
<keyword id="KW-1185">Reference proteome</keyword>
<keyword id="KW-0862">Zinc</keyword>
<keyword id="KW-0863">Zinc-finger</keyword>
<protein>
    <recommendedName>
        <fullName>AN1-type zinc finger protein 3</fullName>
    </recommendedName>
    <alternativeName>
        <fullName>Testis-expressed protein 27</fullName>
    </alternativeName>
</protein>
<accession>Q5U2M7</accession>
<proteinExistence type="evidence at transcript level"/>
<evidence type="ECO:0000255" key="1">
    <source>
        <dbReference type="PROSITE-ProRule" id="PRU00449"/>
    </source>
</evidence>
<evidence type="ECO:0000255" key="2">
    <source>
        <dbReference type="PROSITE-ProRule" id="PRU00451"/>
    </source>
</evidence>
<evidence type="ECO:0000256" key="3">
    <source>
        <dbReference type="SAM" id="MobiDB-lite"/>
    </source>
</evidence>
<reference key="1">
    <citation type="journal article" date="2004" name="Genome Res.">
        <title>The status, quality, and expansion of the NIH full-length cDNA project: the Mammalian Gene Collection (MGC).</title>
        <authorList>
            <consortium name="The MGC Project Team"/>
        </authorList>
    </citation>
    <scope>NUCLEOTIDE SEQUENCE [LARGE SCALE MRNA]</scope>
    <source>
        <tissue>Testis</tissue>
    </source>
</reference>
<feature type="chain" id="PRO_0000076372" description="AN1-type zinc finger protein 3">
    <location>
        <begin position="1"/>
        <end position="227"/>
    </location>
</feature>
<feature type="zinc finger region" description="A20-type" evidence="2">
    <location>
        <begin position="12"/>
        <end position="44"/>
    </location>
</feature>
<feature type="zinc finger region" description="AN1-type" evidence="1">
    <location>
        <begin position="151"/>
        <end position="200"/>
    </location>
</feature>
<feature type="region of interest" description="Disordered" evidence="3">
    <location>
        <begin position="41"/>
        <end position="151"/>
    </location>
</feature>
<feature type="compositionally biased region" description="Low complexity" evidence="3">
    <location>
        <begin position="49"/>
        <end position="59"/>
    </location>
</feature>
<feature type="compositionally biased region" description="Low complexity" evidence="3">
    <location>
        <begin position="66"/>
        <end position="77"/>
    </location>
</feature>
<feature type="compositionally biased region" description="Polar residues" evidence="3">
    <location>
        <begin position="78"/>
        <end position="94"/>
    </location>
</feature>
<feature type="compositionally biased region" description="Polar residues" evidence="3">
    <location>
        <begin position="111"/>
        <end position="127"/>
    </location>
</feature>
<feature type="compositionally biased region" description="Basic and acidic residues" evidence="3">
    <location>
        <begin position="135"/>
        <end position="148"/>
    </location>
</feature>
<feature type="binding site" evidence="2">
    <location>
        <position position="18"/>
    </location>
    <ligand>
        <name>Zn(2+)</name>
        <dbReference type="ChEBI" id="CHEBI:29105"/>
        <label>1</label>
    </ligand>
</feature>
<feature type="binding site" evidence="2">
    <location>
        <position position="20"/>
    </location>
    <ligand>
        <name>Zn(2+)</name>
        <dbReference type="ChEBI" id="CHEBI:29105"/>
        <label>1</label>
    </ligand>
</feature>
<feature type="binding site" evidence="2">
    <location>
        <position position="32"/>
    </location>
    <ligand>
        <name>Zn(2+)</name>
        <dbReference type="ChEBI" id="CHEBI:29105"/>
        <label>1</label>
    </ligand>
</feature>
<feature type="binding site" evidence="2">
    <location>
        <position position="35"/>
    </location>
    <ligand>
        <name>Zn(2+)</name>
        <dbReference type="ChEBI" id="CHEBI:29105"/>
        <label>1</label>
    </ligand>
</feature>
<feature type="binding site" evidence="1">
    <location>
        <position position="157"/>
    </location>
    <ligand>
        <name>Zn(2+)</name>
        <dbReference type="ChEBI" id="CHEBI:29105"/>
        <label>2</label>
    </ligand>
</feature>
<feature type="binding site" evidence="1">
    <location>
        <position position="160"/>
    </location>
    <ligand>
        <name>Zn(2+)</name>
        <dbReference type="ChEBI" id="CHEBI:29105"/>
        <label>2</label>
    </ligand>
</feature>
<feature type="binding site" evidence="1">
    <location>
        <position position="174"/>
    </location>
    <ligand>
        <name>Zn(2+)</name>
        <dbReference type="ChEBI" id="CHEBI:29105"/>
        <label>3</label>
    </ligand>
</feature>
<feature type="binding site" evidence="1">
    <location>
        <position position="176"/>
    </location>
    <ligand>
        <name>Zn(2+)</name>
        <dbReference type="ChEBI" id="CHEBI:29105"/>
        <label>3</label>
    </ligand>
</feature>
<feature type="binding site" evidence="1">
    <location>
        <position position="181"/>
    </location>
    <ligand>
        <name>Zn(2+)</name>
        <dbReference type="ChEBI" id="CHEBI:29105"/>
        <label>2</label>
    </ligand>
</feature>
<feature type="binding site" evidence="1">
    <location>
        <position position="184"/>
    </location>
    <ligand>
        <name>Zn(2+)</name>
        <dbReference type="ChEBI" id="CHEBI:29105"/>
        <label>2</label>
    </ligand>
</feature>
<feature type="binding site" evidence="1">
    <location>
        <position position="190"/>
    </location>
    <ligand>
        <name>Zn(2+)</name>
        <dbReference type="ChEBI" id="CHEBI:29105"/>
        <label>3</label>
    </ligand>
</feature>
<feature type="binding site" evidence="1">
    <location>
        <position position="192"/>
    </location>
    <ligand>
        <name>Zn(2+)</name>
        <dbReference type="ChEBI" id="CHEBI:29105"/>
        <label>3</label>
    </ligand>
</feature>
<organism>
    <name type="scientific">Rattus norvegicus</name>
    <name type="common">Rat</name>
    <dbReference type="NCBI Taxonomy" id="10116"/>
    <lineage>
        <taxon>Eukaryota</taxon>
        <taxon>Metazoa</taxon>
        <taxon>Chordata</taxon>
        <taxon>Craniata</taxon>
        <taxon>Vertebrata</taxon>
        <taxon>Euteleostomi</taxon>
        <taxon>Mammalia</taxon>
        <taxon>Eutheria</taxon>
        <taxon>Euarchontoglires</taxon>
        <taxon>Glires</taxon>
        <taxon>Rodentia</taxon>
        <taxon>Myomorpha</taxon>
        <taxon>Muroidea</taxon>
        <taxon>Muridae</taxon>
        <taxon>Murinae</taxon>
        <taxon>Rattus</taxon>
    </lineage>
</organism>
<dbReference type="EMBL" id="BC085956">
    <property type="protein sequence ID" value="AAH85956.1"/>
    <property type="molecule type" value="mRNA"/>
</dbReference>
<dbReference type="RefSeq" id="NP_001012175.1">
    <property type="nucleotide sequence ID" value="NM_001012175.1"/>
</dbReference>
<dbReference type="SMR" id="Q5U2M7"/>
<dbReference type="FunCoup" id="Q5U2M7">
    <property type="interactions" value="2192"/>
</dbReference>
<dbReference type="STRING" id="10116.ENSRNOP00000069304"/>
<dbReference type="PhosphoSitePlus" id="Q5U2M7"/>
<dbReference type="PaxDb" id="10116-ENSRNOP00000048094"/>
<dbReference type="Ensembl" id="ENSRNOT00000085131.2">
    <property type="protein sequence ID" value="ENSRNOP00000069304.2"/>
    <property type="gene ID" value="ENSRNOG00000059659.2"/>
</dbReference>
<dbReference type="GeneID" id="361816"/>
<dbReference type="KEGG" id="rno:361816"/>
<dbReference type="UCSC" id="RGD:1307113">
    <property type="organism name" value="rat"/>
</dbReference>
<dbReference type="AGR" id="RGD:1307113"/>
<dbReference type="CTD" id="60685"/>
<dbReference type="RGD" id="1307113">
    <property type="gene designation" value="Zfand3"/>
</dbReference>
<dbReference type="eggNOG" id="KOG3173">
    <property type="taxonomic scope" value="Eukaryota"/>
</dbReference>
<dbReference type="GeneTree" id="ENSGT00390000014679"/>
<dbReference type="InParanoid" id="Q5U2M7"/>
<dbReference type="OrthoDB" id="55721at9989"/>
<dbReference type="PhylomeDB" id="Q5U2M7"/>
<dbReference type="PRO" id="PR:Q5U2M7"/>
<dbReference type="Proteomes" id="UP000002494">
    <property type="component" value="Chromosome 20"/>
</dbReference>
<dbReference type="GO" id="GO:0003677">
    <property type="term" value="F:DNA binding"/>
    <property type="evidence" value="ECO:0007669"/>
    <property type="project" value="InterPro"/>
</dbReference>
<dbReference type="GO" id="GO:0008270">
    <property type="term" value="F:zinc ion binding"/>
    <property type="evidence" value="ECO:0007669"/>
    <property type="project" value="UniProtKB-KW"/>
</dbReference>
<dbReference type="FunFam" id="4.10.1110.10:FF:000011">
    <property type="entry name" value="AN1-type zinc finger protein 3"/>
    <property type="match status" value="1"/>
</dbReference>
<dbReference type="Gene3D" id="1.20.5.4770">
    <property type="match status" value="1"/>
</dbReference>
<dbReference type="Gene3D" id="4.10.1110.10">
    <property type="entry name" value="AN1-like Zinc finger"/>
    <property type="match status" value="1"/>
</dbReference>
<dbReference type="InterPro" id="IPR035896">
    <property type="entry name" value="AN1-like_Znf"/>
</dbReference>
<dbReference type="InterPro" id="IPR050652">
    <property type="entry name" value="AN1_A20_ZnFinger"/>
</dbReference>
<dbReference type="InterPro" id="IPR002653">
    <property type="entry name" value="Znf_A20"/>
</dbReference>
<dbReference type="InterPro" id="IPR000058">
    <property type="entry name" value="Znf_AN1"/>
</dbReference>
<dbReference type="PANTHER" id="PTHR10634">
    <property type="entry name" value="AN1-TYPE ZINC FINGER PROTEIN"/>
    <property type="match status" value="1"/>
</dbReference>
<dbReference type="PANTHER" id="PTHR10634:SF67">
    <property type="entry name" value="AN1-TYPE ZINC FINGER PROTEIN 3"/>
    <property type="match status" value="1"/>
</dbReference>
<dbReference type="Pfam" id="PF01754">
    <property type="entry name" value="zf-A20"/>
    <property type="match status" value="1"/>
</dbReference>
<dbReference type="Pfam" id="PF01428">
    <property type="entry name" value="zf-AN1"/>
    <property type="match status" value="1"/>
</dbReference>
<dbReference type="SMART" id="SM00259">
    <property type="entry name" value="ZnF_A20"/>
    <property type="match status" value="1"/>
</dbReference>
<dbReference type="SMART" id="SM00154">
    <property type="entry name" value="ZnF_AN1"/>
    <property type="match status" value="1"/>
</dbReference>
<dbReference type="SUPFAM" id="SSF118310">
    <property type="entry name" value="AN1-like Zinc finger"/>
    <property type="match status" value="1"/>
</dbReference>
<dbReference type="SUPFAM" id="SSF57716">
    <property type="entry name" value="Glucocorticoid receptor-like (DNA-binding domain)"/>
    <property type="match status" value="1"/>
</dbReference>
<dbReference type="PROSITE" id="PS51036">
    <property type="entry name" value="ZF_A20"/>
    <property type="match status" value="1"/>
</dbReference>
<dbReference type="PROSITE" id="PS51039">
    <property type="entry name" value="ZF_AN1"/>
    <property type="match status" value="1"/>
</dbReference>
<gene>
    <name type="primary">Zfand3</name>
    <name type="synonym">Tex27</name>
</gene>
<name>ZFAN3_RAT</name>